<gene>
    <name type="primary">SH</name>
</gene>
<organism>
    <name type="scientific">Mumps virus genotype B (strain Miyahara vaccine)</name>
    <name type="common">MuV</name>
    <dbReference type="NCBI Taxonomy" id="11171"/>
    <lineage>
        <taxon>Viruses</taxon>
        <taxon>Riboviria</taxon>
        <taxon>Orthornavirae</taxon>
        <taxon>Negarnaviricota</taxon>
        <taxon>Haploviricotina</taxon>
        <taxon>Monjiviricetes</taxon>
        <taxon>Mononegavirales</taxon>
        <taxon>Paramyxoviridae</taxon>
        <taxon>Rubulavirinae</taxon>
        <taxon>Orthorubulavirus</taxon>
        <taxon>Orthorubulavirus parotitidis</taxon>
        <taxon>Mumps orthorubulavirus</taxon>
    </lineage>
</organism>
<evidence type="ECO:0000250" key="1">
    <source>
        <dbReference type="UniProtKB" id="P22110"/>
    </source>
</evidence>
<evidence type="ECO:0000255" key="2"/>
<evidence type="ECO:0000269" key="3">
    <source>
    </source>
</evidence>
<evidence type="ECO:0000305" key="4"/>
<reference key="1">
    <citation type="journal article" date="1992" name="Virology">
        <title>Molecular cloning and sequence analysis of the mumps virus gene encoding the L protein and the trailer sequence.</title>
        <authorList>
            <person name="Okazaki K."/>
            <person name="Tanabayashi K."/>
            <person name="Takeuchi K."/>
            <person name="Hishiyama M."/>
            <person name="Okazaki K."/>
            <person name="Yamada A."/>
        </authorList>
    </citation>
    <scope>NUCLEOTIDE SEQUENCE [GENOMIC RNA]</scope>
</reference>
<reference key="2">
    <citation type="journal article" date="2017" name="J. Virol.">
        <title>Mumps virus SH protein inhibits NF-kappaB activation by interacting with tumor necrosis factor receptor 1, interleukin-1 receptor 1, and Toll-like receptor 3 complexes.</title>
        <authorList>
            <person name="Franz S."/>
            <person name="Rennert P."/>
            <person name="Woznik M."/>
            <person name="Gruetzke J."/>
            <person name="Luedde A."/>
            <person name="Arriero Pais E.M."/>
            <person name="Finsterbusch T."/>
            <person name="Geyer H."/>
            <person name="Mankertz A."/>
            <person name="Friedrich N."/>
        </authorList>
    </citation>
    <scope>FUNCTION</scope>
    <scope>INTERACTION WITH HOST TNFRSF1A; RIPK1 AND IRAK1</scope>
</reference>
<accession>P22112</accession>
<accession>Q783V8</accession>
<feature type="chain" id="PRO_0000142881" description="Small hydrophobic protein">
    <location>
        <begin position="1"/>
        <end position="57"/>
    </location>
</feature>
<feature type="topological domain" description="Virion surface" evidence="2">
    <location>
        <begin position="1"/>
        <end position="8"/>
    </location>
</feature>
<feature type="transmembrane region" description="Helical" evidence="2">
    <location>
        <begin position="9"/>
        <end position="29"/>
    </location>
</feature>
<feature type="topological domain" description="Intravirion" evidence="2">
    <location>
        <begin position="30"/>
        <end position="57"/>
    </location>
</feature>
<protein>
    <recommendedName>
        <fullName>Small hydrophobic protein</fullName>
    </recommendedName>
</protein>
<sequence length="57" mass="6621">MPAIQPPLYPTFLLLILLSLIITLYVWIISTITYKTAVRHAALHQRSFSRWSLDHSL</sequence>
<name>SH_MUMPM</name>
<proteinExistence type="evidence at protein level"/>
<organismHost>
    <name type="scientific">Homo sapiens</name>
    <name type="common">Human</name>
    <dbReference type="NCBI Taxonomy" id="9606"/>
</organismHost>
<comment type="function">
    <text evidence="3">Plays a role in the inhibition of the host NF-kappa-B pathway. This inhibition occurs at the receptor level, by preventing the signaling of TNFR1 as well as IL-1R and TLR3.</text>
</comment>
<comment type="subunit">
    <text evidence="1 3">Interacts with host TNFRSF1A, RIPK1 and IRAK1; these interactions interfere with host NF-kappa-B activation at the level of receptor complexes (PubMed:28659487). Interacts with host protein UBQLN4 (By similarity).</text>
</comment>
<comment type="subcellular location">
    <subcellularLocation>
        <location evidence="4">Virion membrane</location>
        <topology evidence="4">Single-pass membrane protein</topology>
    </subcellularLocation>
    <subcellularLocation>
        <location evidence="4">Host cell membrane</location>
        <topology evidence="4">Single-pass membrane protein</topology>
    </subcellularLocation>
</comment>
<comment type="similarity">
    <text evidence="4">Belongs to the rubulavirus small hydrophobic protein family.</text>
</comment>
<keyword id="KW-1032">Host cell membrane</keyword>
<keyword id="KW-1043">Host membrane</keyword>
<keyword id="KW-0945">Host-virus interaction</keyword>
<keyword id="KW-1100">Inhibition of host NF-kappa-B by virus</keyword>
<keyword id="KW-0472">Membrane</keyword>
<keyword id="KW-1185">Reference proteome</keyword>
<keyword id="KW-0812">Transmembrane</keyword>
<keyword id="KW-1133">Transmembrane helix</keyword>
<keyword id="KW-0946">Virion</keyword>
<dbReference type="EMBL" id="D90234">
    <property type="protein sequence ID" value="BAA14282.1"/>
    <property type="molecule type" value="Genomic_RNA"/>
</dbReference>
<dbReference type="EMBL" id="AB040874">
    <property type="protein sequence ID" value="BAA94389.1"/>
    <property type="molecule type" value="Genomic_RNA"/>
</dbReference>
<dbReference type="PIR" id="JU0304">
    <property type="entry name" value="SHNZMS"/>
</dbReference>
<dbReference type="SMR" id="P22112"/>
<dbReference type="KEGG" id="vg:1489767"/>
<dbReference type="Proteomes" id="UP000002331">
    <property type="component" value="Segment"/>
</dbReference>
<dbReference type="GO" id="GO:0020002">
    <property type="term" value="C:host cell plasma membrane"/>
    <property type="evidence" value="ECO:0007669"/>
    <property type="project" value="UniProtKB-SubCell"/>
</dbReference>
<dbReference type="GO" id="GO:0016020">
    <property type="term" value="C:membrane"/>
    <property type="evidence" value="ECO:0007669"/>
    <property type="project" value="UniProtKB-KW"/>
</dbReference>
<dbReference type="GO" id="GO:0055036">
    <property type="term" value="C:virion membrane"/>
    <property type="evidence" value="ECO:0007669"/>
    <property type="project" value="UniProtKB-SubCell"/>
</dbReference>
<dbReference type="GO" id="GO:0085034">
    <property type="term" value="P:symbiont-mediated suppression of host NF-kappaB cascade"/>
    <property type="evidence" value="ECO:0000314"/>
    <property type="project" value="UniProtKB"/>
</dbReference>
<dbReference type="InterPro" id="IPR001477">
    <property type="entry name" value="SH"/>
</dbReference>
<dbReference type="Pfam" id="PF01445">
    <property type="entry name" value="SH"/>
    <property type="match status" value="1"/>
</dbReference>
<dbReference type="PIRSF" id="PIRSF003923">
    <property type="entry name" value="SH"/>
    <property type="match status" value="1"/>
</dbReference>